<sequence length="457" mass="46958">MRVSAVAVAAPASGSGKTTIATGLIGALRQAGHTVAPFKVGPDFIDPGYHALAAGRPGRNLDPVLVGERLIGPLYAHGVAGADIAVIEGVLGLFDGRIGPAGGAPAAGSTAHVAALLGAPVILVVDARGQSHSVAALLHGFSTFDTATRIAGVILNRVGSARHEQVLRQACDQAGVAVLGAIPRTAELELPTRYLGLVTAVEYGRRARLAVQAMTAVVARHVDLAAVIACAGSQAAHPPWDPVIAVGNTARQPATVAIAAGRAFTFGYAEHAEMLRAAGAEVVEFDPLSETLPEGTDAVVLPGGFPEQFTAELSANDTVRRQINELAAAGAPVHAECAGLLYLVSELDGHPMCGVVAGSARFTQHLKLGYRDAVAVVDSALYSVGERVVGHEFHRTAVTFADSYQPAWVYQGQDVDDVRDGAVHSGVHASYLHTHPAATPGAVARFVAHAACNTPRA</sequence>
<reference key="1">
    <citation type="journal article" date="1998" name="Nature">
        <title>Deciphering the biology of Mycobacterium tuberculosis from the complete genome sequence.</title>
        <authorList>
            <person name="Cole S.T."/>
            <person name="Brosch R."/>
            <person name="Parkhill J."/>
            <person name="Garnier T."/>
            <person name="Churcher C.M."/>
            <person name="Harris D.E."/>
            <person name="Gordon S.V."/>
            <person name="Eiglmeier K."/>
            <person name="Gas S."/>
            <person name="Barry C.E. III"/>
            <person name="Tekaia F."/>
            <person name="Badcock K."/>
            <person name="Basham D."/>
            <person name="Brown D."/>
            <person name="Chillingworth T."/>
            <person name="Connor R."/>
            <person name="Davies R.M."/>
            <person name="Devlin K."/>
            <person name="Feltwell T."/>
            <person name="Gentles S."/>
            <person name="Hamlin N."/>
            <person name="Holroyd S."/>
            <person name="Hornsby T."/>
            <person name="Jagels K."/>
            <person name="Krogh A."/>
            <person name="McLean J."/>
            <person name="Moule S."/>
            <person name="Murphy L.D."/>
            <person name="Oliver S."/>
            <person name="Osborne J."/>
            <person name="Quail M.A."/>
            <person name="Rajandream M.A."/>
            <person name="Rogers J."/>
            <person name="Rutter S."/>
            <person name="Seeger K."/>
            <person name="Skelton S."/>
            <person name="Squares S."/>
            <person name="Squares R."/>
            <person name="Sulston J.E."/>
            <person name="Taylor K."/>
            <person name="Whitehead S."/>
            <person name="Barrell B.G."/>
        </authorList>
    </citation>
    <scope>NUCLEOTIDE SEQUENCE [LARGE SCALE GENOMIC DNA]</scope>
    <source>
        <strain>ATCC 25618 / H37Rv</strain>
    </source>
</reference>
<reference key="2">
    <citation type="journal article" date="2011" name="Mol. Cell. Proteomics">
        <title>Proteogenomic analysis of Mycobacterium tuberculosis by high resolution mass spectrometry.</title>
        <authorList>
            <person name="Kelkar D.S."/>
            <person name="Kumar D."/>
            <person name="Kumar P."/>
            <person name="Balakrishnan L."/>
            <person name="Muthusamy B."/>
            <person name="Yadav A.K."/>
            <person name="Shrivastava P."/>
            <person name="Marimuthu A."/>
            <person name="Anand S."/>
            <person name="Sundaram H."/>
            <person name="Kingsbury R."/>
            <person name="Harsha H.C."/>
            <person name="Nair B."/>
            <person name="Prasad T.S."/>
            <person name="Chauhan D.S."/>
            <person name="Katoch K."/>
            <person name="Katoch V.M."/>
            <person name="Kumar P."/>
            <person name="Chaerkady R."/>
            <person name="Ramachandran S."/>
            <person name="Dash D."/>
            <person name="Pandey A."/>
        </authorList>
    </citation>
    <scope>IDENTIFICATION BY MASS SPECTROMETRY [LARGE SCALE ANALYSIS]</scope>
    <source>
        <strain>ATCC 25618 / H37Rv</strain>
    </source>
</reference>
<dbReference type="EC" id="6.3.5.9" evidence="1"/>
<dbReference type="EMBL" id="AL123456">
    <property type="protein sequence ID" value="CCP45649.1"/>
    <property type="molecule type" value="Genomic_DNA"/>
</dbReference>
<dbReference type="PIR" id="C70589">
    <property type="entry name" value="C70589"/>
</dbReference>
<dbReference type="RefSeq" id="NP_217364.1">
    <property type="nucleotide sequence ID" value="NC_000962.3"/>
</dbReference>
<dbReference type="RefSeq" id="WP_003899509.1">
    <property type="nucleotide sequence ID" value="NZ_NVQJ01000006.1"/>
</dbReference>
<dbReference type="SMR" id="P9WP97"/>
<dbReference type="FunCoup" id="P9WP97">
    <property type="interactions" value="132"/>
</dbReference>
<dbReference type="STRING" id="83332.Rv2848c"/>
<dbReference type="PaxDb" id="83332-Rv2848c"/>
<dbReference type="DNASU" id="888499"/>
<dbReference type="GeneID" id="888499"/>
<dbReference type="KEGG" id="mtu:Rv2848c"/>
<dbReference type="KEGG" id="mtv:RVBD_2848c"/>
<dbReference type="TubercuList" id="Rv2848c"/>
<dbReference type="eggNOG" id="COG1797">
    <property type="taxonomic scope" value="Bacteria"/>
</dbReference>
<dbReference type="InParanoid" id="P9WP97"/>
<dbReference type="OrthoDB" id="9764035at2"/>
<dbReference type="PhylomeDB" id="P9WP97"/>
<dbReference type="UniPathway" id="UPA00148">
    <property type="reaction ID" value="UER00220"/>
</dbReference>
<dbReference type="Proteomes" id="UP000001584">
    <property type="component" value="Chromosome"/>
</dbReference>
<dbReference type="GO" id="GO:0005886">
    <property type="term" value="C:plasma membrane"/>
    <property type="evidence" value="ECO:0007005"/>
    <property type="project" value="MTBBASE"/>
</dbReference>
<dbReference type="GO" id="GO:0005524">
    <property type="term" value="F:ATP binding"/>
    <property type="evidence" value="ECO:0007669"/>
    <property type="project" value="UniProtKB-UniRule"/>
</dbReference>
<dbReference type="GO" id="GO:0042242">
    <property type="term" value="F:cobyrinic acid a,c-diamide synthase activity"/>
    <property type="evidence" value="ECO:0007669"/>
    <property type="project" value="InterPro"/>
</dbReference>
<dbReference type="GO" id="GO:0043802">
    <property type="term" value="F:hydrogenobyrinic acid a,c-diamide synthase (glutamine-hydrolysing) activity"/>
    <property type="evidence" value="ECO:0007669"/>
    <property type="project" value="UniProtKB-UniRule"/>
</dbReference>
<dbReference type="GO" id="GO:0009236">
    <property type="term" value="P:cobalamin biosynthetic process"/>
    <property type="evidence" value="ECO:0007669"/>
    <property type="project" value="UniProtKB-UniRule"/>
</dbReference>
<dbReference type="CDD" id="cd05388">
    <property type="entry name" value="CobB_N"/>
    <property type="match status" value="1"/>
</dbReference>
<dbReference type="CDD" id="cd03130">
    <property type="entry name" value="GATase1_CobB"/>
    <property type="match status" value="1"/>
</dbReference>
<dbReference type="FunFam" id="3.40.50.300:FF:002379">
    <property type="entry name" value="Hydrogenobyrinate a,c-diamide synthase"/>
    <property type="match status" value="1"/>
</dbReference>
<dbReference type="FunFam" id="3.40.50.880:FF:000098">
    <property type="entry name" value="Hydrogenobyrinate a,c-diamide synthase"/>
    <property type="match status" value="1"/>
</dbReference>
<dbReference type="Gene3D" id="3.40.50.880">
    <property type="match status" value="1"/>
</dbReference>
<dbReference type="Gene3D" id="3.40.50.300">
    <property type="entry name" value="P-loop containing nucleotide triphosphate hydrolases"/>
    <property type="match status" value="1"/>
</dbReference>
<dbReference type="HAMAP" id="MF_00027">
    <property type="entry name" value="CobB_CbiA"/>
    <property type="match status" value="1"/>
</dbReference>
<dbReference type="InterPro" id="IPR004484">
    <property type="entry name" value="CbiA/CobB_synth"/>
</dbReference>
<dbReference type="InterPro" id="IPR029062">
    <property type="entry name" value="Class_I_gatase-like"/>
</dbReference>
<dbReference type="InterPro" id="IPR002586">
    <property type="entry name" value="CobQ/CobB/MinD/ParA_Nub-bd_dom"/>
</dbReference>
<dbReference type="InterPro" id="IPR011698">
    <property type="entry name" value="GATase_3"/>
</dbReference>
<dbReference type="InterPro" id="IPR027417">
    <property type="entry name" value="P-loop_NTPase"/>
</dbReference>
<dbReference type="NCBIfam" id="TIGR00379">
    <property type="entry name" value="cobB"/>
    <property type="match status" value="1"/>
</dbReference>
<dbReference type="NCBIfam" id="NF002204">
    <property type="entry name" value="PRK01077.1"/>
    <property type="match status" value="1"/>
</dbReference>
<dbReference type="PANTHER" id="PTHR43873">
    <property type="entry name" value="COBYRINATE A,C-DIAMIDE SYNTHASE"/>
    <property type="match status" value="1"/>
</dbReference>
<dbReference type="PANTHER" id="PTHR43873:SF1">
    <property type="entry name" value="COBYRINATE A,C-DIAMIDE SYNTHASE"/>
    <property type="match status" value="1"/>
</dbReference>
<dbReference type="Pfam" id="PF01656">
    <property type="entry name" value="CbiA"/>
    <property type="match status" value="1"/>
</dbReference>
<dbReference type="Pfam" id="PF07685">
    <property type="entry name" value="GATase_3"/>
    <property type="match status" value="1"/>
</dbReference>
<dbReference type="SUPFAM" id="SSF52317">
    <property type="entry name" value="Class I glutamine amidotransferase-like"/>
    <property type="match status" value="1"/>
</dbReference>
<dbReference type="SUPFAM" id="SSF52540">
    <property type="entry name" value="P-loop containing nucleoside triphosphate hydrolases"/>
    <property type="match status" value="1"/>
</dbReference>
<dbReference type="PROSITE" id="PS51274">
    <property type="entry name" value="GATASE_COBBQ"/>
    <property type="match status" value="1"/>
</dbReference>
<protein>
    <recommendedName>
        <fullName evidence="1">Hydrogenobyrinate a,c-diamide synthase</fullName>
        <ecNumber evidence="1">6.3.5.9</ecNumber>
    </recommendedName>
    <alternativeName>
        <fullName evidence="1">Hydrogenobyrinic acid a,c-diamide synthase</fullName>
    </alternativeName>
</protein>
<proteinExistence type="evidence at protein level"/>
<evidence type="ECO:0000255" key="1">
    <source>
        <dbReference type="HAMAP-Rule" id="MF_00027"/>
    </source>
</evidence>
<name>COBB_MYCTU</name>
<keyword id="KW-0067">ATP-binding</keyword>
<keyword id="KW-0169">Cobalamin biosynthesis</keyword>
<keyword id="KW-0315">Glutamine amidotransferase</keyword>
<keyword id="KW-0436">Ligase</keyword>
<keyword id="KW-0460">Magnesium</keyword>
<keyword id="KW-0547">Nucleotide-binding</keyword>
<keyword id="KW-1185">Reference proteome</keyword>
<feature type="chain" id="PRO_0000141262" description="Hydrogenobyrinate a,c-diamide synthase">
    <location>
        <begin position="1"/>
        <end position="457"/>
    </location>
</feature>
<feature type="domain" description="GATase cobBQ-type" evidence="1">
    <location>
        <begin position="255"/>
        <end position="441"/>
    </location>
</feature>
<feature type="active site" description="Nucleophile" evidence="1">
    <location>
        <position position="337"/>
    </location>
</feature>
<feature type="site" description="Increases nucleophilicity of active site Cys" evidence="1">
    <location>
        <position position="433"/>
    </location>
</feature>
<gene>
    <name evidence="1" type="primary">cobB</name>
    <name type="ordered locus">Rv2848c</name>
    <name type="ORF">MTCY24A1.09</name>
</gene>
<accession>P9WP97</accession>
<accession>L0TCF1</accession>
<accession>O05811</accession>
<accession>P63835</accession>
<organism>
    <name type="scientific">Mycobacterium tuberculosis (strain ATCC 25618 / H37Rv)</name>
    <dbReference type="NCBI Taxonomy" id="83332"/>
    <lineage>
        <taxon>Bacteria</taxon>
        <taxon>Bacillati</taxon>
        <taxon>Actinomycetota</taxon>
        <taxon>Actinomycetes</taxon>
        <taxon>Mycobacteriales</taxon>
        <taxon>Mycobacteriaceae</taxon>
        <taxon>Mycobacterium</taxon>
        <taxon>Mycobacterium tuberculosis complex</taxon>
    </lineage>
</organism>
<comment type="function">
    <text evidence="1">Catalyzes the ATP-dependent amidation of the two carboxylate groups at positions a and c of hydrogenobyrinate, using either L-glutamine or ammonia as the nitrogen source.</text>
</comment>
<comment type="catalytic activity">
    <reaction evidence="1">
        <text>hydrogenobyrinate + 2 L-glutamine + 2 ATP + 2 H2O = hydrogenobyrinate a,c-diamide + 2 L-glutamate + 2 ADP + 2 phosphate + 2 H(+)</text>
        <dbReference type="Rhea" id="RHEA:12544"/>
        <dbReference type="ChEBI" id="CHEBI:15377"/>
        <dbReference type="ChEBI" id="CHEBI:15378"/>
        <dbReference type="ChEBI" id="CHEBI:29985"/>
        <dbReference type="ChEBI" id="CHEBI:30616"/>
        <dbReference type="ChEBI" id="CHEBI:43474"/>
        <dbReference type="ChEBI" id="CHEBI:58359"/>
        <dbReference type="ChEBI" id="CHEBI:77873"/>
        <dbReference type="ChEBI" id="CHEBI:77874"/>
        <dbReference type="ChEBI" id="CHEBI:456216"/>
        <dbReference type="EC" id="6.3.5.9"/>
    </reaction>
</comment>
<comment type="cofactor">
    <cofactor evidence="1">
        <name>Mg(2+)</name>
        <dbReference type="ChEBI" id="CHEBI:18420"/>
    </cofactor>
</comment>
<comment type="pathway">
    <text evidence="1">Cofactor biosynthesis; adenosylcobalamin biosynthesis; cob(II)yrinate a,c-diamide from precorrin-2 (aerobic route): step 9/10.</text>
</comment>
<comment type="domain">
    <text evidence="1">Comprises of two domains. The C-terminal domain contains the binding site for glutamine and catalyzes the hydrolysis of this substrate to glutamate and ammonia. The N-terminal domain is anticipated to bind ATP and hydrogenobyrinate and catalyzes the ultimate synthesis of the diamide product. The ammonia produced via the glutaminase domain is probably translocated to the adjacent domain via a molecular tunnel, where it reacts with an activated intermediate.</text>
</comment>
<comment type="miscellaneous">
    <text evidence="1">The a and c carboxylates of hydrogenobyrinate are activated for nucleophilic attack via formation of a phosphorylated intermediate by ATP. CobB catalyzes first the amidation of the c-carboxylate, and then that of the a-carboxylate.</text>
</comment>
<comment type="similarity">
    <text evidence="1">Belongs to the CobB/CbiA family.</text>
</comment>